<gene>
    <name evidence="1" type="primary">ihfA</name>
    <name evidence="1" type="synonym">himA</name>
    <name type="ordered locus">VV1_2375</name>
</gene>
<feature type="chain" id="PRO_0000105031" description="Integration host factor subunit alpha">
    <location>
        <begin position="1"/>
        <end position="95"/>
    </location>
</feature>
<feature type="region of interest" description="Disordered" evidence="2">
    <location>
        <begin position="51"/>
        <end position="71"/>
    </location>
</feature>
<feature type="compositionally biased region" description="Basic and acidic residues" evidence="2">
    <location>
        <begin position="53"/>
        <end position="69"/>
    </location>
</feature>
<protein>
    <recommendedName>
        <fullName evidence="1">Integration host factor subunit alpha</fullName>
        <shortName evidence="1">IHF-alpha</shortName>
    </recommendedName>
</protein>
<evidence type="ECO:0000255" key="1">
    <source>
        <dbReference type="HAMAP-Rule" id="MF_00380"/>
    </source>
</evidence>
<evidence type="ECO:0000256" key="2">
    <source>
        <dbReference type="SAM" id="MobiDB-lite"/>
    </source>
</evidence>
<reference key="1">
    <citation type="submission" date="2002-12" db="EMBL/GenBank/DDBJ databases">
        <title>Complete genome sequence of Vibrio vulnificus CMCP6.</title>
        <authorList>
            <person name="Rhee J.H."/>
            <person name="Kim S.Y."/>
            <person name="Chung S.S."/>
            <person name="Kim J.J."/>
            <person name="Moon Y.H."/>
            <person name="Jeong H."/>
            <person name="Choy H.E."/>
        </authorList>
    </citation>
    <scope>NUCLEOTIDE SEQUENCE [LARGE SCALE GENOMIC DNA]</scope>
    <source>
        <strain>CMCP6</strain>
    </source>
</reference>
<organism>
    <name type="scientific">Vibrio vulnificus (strain CMCP6)</name>
    <dbReference type="NCBI Taxonomy" id="216895"/>
    <lineage>
        <taxon>Bacteria</taxon>
        <taxon>Pseudomonadati</taxon>
        <taxon>Pseudomonadota</taxon>
        <taxon>Gammaproteobacteria</taxon>
        <taxon>Vibrionales</taxon>
        <taxon>Vibrionaceae</taxon>
        <taxon>Vibrio</taxon>
    </lineage>
</organism>
<name>IHFA_VIBVU</name>
<keyword id="KW-0233">DNA recombination</keyword>
<keyword id="KW-0238">DNA-binding</keyword>
<keyword id="KW-0804">Transcription</keyword>
<keyword id="KW-0805">Transcription regulation</keyword>
<keyword id="KW-0810">Translation regulation</keyword>
<dbReference type="EMBL" id="AE016795">
    <property type="protein sequence ID" value="AAO10749.1"/>
    <property type="molecule type" value="Genomic_DNA"/>
</dbReference>
<dbReference type="RefSeq" id="WP_011080242.1">
    <property type="nucleotide sequence ID" value="NC_004459.3"/>
</dbReference>
<dbReference type="SMR" id="Q8DA35"/>
<dbReference type="KEGG" id="vvu:VV1_2375"/>
<dbReference type="HOGENOM" id="CLU_105066_1_3_6"/>
<dbReference type="Proteomes" id="UP000002275">
    <property type="component" value="Chromosome 1"/>
</dbReference>
<dbReference type="GO" id="GO:0005829">
    <property type="term" value="C:cytosol"/>
    <property type="evidence" value="ECO:0007669"/>
    <property type="project" value="TreeGrafter"/>
</dbReference>
<dbReference type="GO" id="GO:0003677">
    <property type="term" value="F:DNA binding"/>
    <property type="evidence" value="ECO:0007669"/>
    <property type="project" value="UniProtKB-UniRule"/>
</dbReference>
<dbReference type="GO" id="GO:0030527">
    <property type="term" value="F:structural constituent of chromatin"/>
    <property type="evidence" value="ECO:0007669"/>
    <property type="project" value="InterPro"/>
</dbReference>
<dbReference type="GO" id="GO:0006310">
    <property type="term" value="P:DNA recombination"/>
    <property type="evidence" value="ECO:0007669"/>
    <property type="project" value="UniProtKB-UniRule"/>
</dbReference>
<dbReference type="GO" id="GO:0009893">
    <property type="term" value="P:positive regulation of metabolic process"/>
    <property type="evidence" value="ECO:0007669"/>
    <property type="project" value="UniProtKB-ARBA"/>
</dbReference>
<dbReference type="GO" id="GO:0006355">
    <property type="term" value="P:regulation of DNA-templated transcription"/>
    <property type="evidence" value="ECO:0007669"/>
    <property type="project" value="UniProtKB-UniRule"/>
</dbReference>
<dbReference type="GO" id="GO:0006417">
    <property type="term" value="P:regulation of translation"/>
    <property type="evidence" value="ECO:0007669"/>
    <property type="project" value="UniProtKB-UniRule"/>
</dbReference>
<dbReference type="CDD" id="cd13835">
    <property type="entry name" value="IHF_A"/>
    <property type="match status" value="1"/>
</dbReference>
<dbReference type="FunFam" id="4.10.520.10:FF:000002">
    <property type="entry name" value="Integration host factor subunit alpha"/>
    <property type="match status" value="1"/>
</dbReference>
<dbReference type="Gene3D" id="4.10.520.10">
    <property type="entry name" value="IHF-like DNA-binding proteins"/>
    <property type="match status" value="1"/>
</dbReference>
<dbReference type="HAMAP" id="MF_00380">
    <property type="entry name" value="IHF_alpha"/>
    <property type="match status" value="1"/>
</dbReference>
<dbReference type="InterPro" id="IPR000119">
    <property type="entry name" value="Hist_DNA-bd"/>
</dbReference>
<dbReference type="InterPro" id="IPR020816">
    <property type="entry name" value="Histone-like_DNA-bd_CS"/>
</dbReference>
<dbReference type="InterPro" id="IPR010992">
    <property type="entry name" value="IHF-like_DNA-bd_dom_sf"/>
</dbReference>
<dbReference type="InterPro" id="IPR005684">
    <property type="entry name" value="IHF_alpha"/>
</dbReference>
<dbReference type="NCBIfam" id="TIGR00987">
    <property type="entry name" value="himA"/>
    <property type="match status" value="1"/>
</dbReference>
<dbReference type="NCBIfam" id="NF001401">
    <property type="entry name" value="PRK00285.1"/>
    <property type="match status" value="1"/>
</dbReference>
<dbReference type="PANTHER" id="PTHR33175">
    <property type="entry name" value="DNA-BINDING PROTEIN HU"/>
    <property type="match status" value="1"/>
</dbReference>
<dbReference type="PANTHER" id="PTHR33175:SF2">
    <property type="entry name" value="INTEGRATION HOST FACTOR SUBUNIT ALPHA"/>
    <property type="match status" value="1"/>
</dbReference>
<dbReference type="Pfam" id="PF00216">
    <property type="entry name" value="Bac_DNA_binding"/>
    <property type="match status" value="1"/>
</dbReference>
<dbReference type="PRINTS" id="PR01727">
    <property type="entry name" value="DNABINDINGHU"/>
</dbReference>
<dbReference type="SMART" id="SM00411">
    <property type="entry name" value="BHL"/>
    <property type="match status" value="1"/>
</dbReference>
<dbReference type="SUPFAM" id="SSF47729">
    <property type="entry name" value="IHF-like DNA-binding proteins"/>
    <property type="match status" value="1"/>
</dbReference>
<dbReference type="PROSITE" id="PS00045">
    <property type="entry name" value="HISTONE_LIKE"/>
    <property type="match status" value="1"/>
</dbReference>
<proteinExistence type="inferred from homology"/>
<comment type="function">
    <text evidence="1">This protein is one of the two subunits of integration host factor, a specific DNA-binding protein that functions in genetic recombination as well as in transcriptional and translational control.</text>
</comment>
<comment type="subunit">
    <text evidence="1">Heterodimer of an alpha and a beta chain.</text>
</comment>
<comment type="similarity">
    <text evidence="1">Belongs to the bacterial histone-like protein family.</text>
</comment>
<sequence length="95" mass="10835">MALTKADLAENLFEKLGFSKRDAKDTVEVFFEEIRKALENGEQVKLSGFGNFDLRDKNERPGRNPKTGEDIPITARRVVTFRPGQKLKARVENLK</sequence>
<accession>Q8DA35</accession>